<reference key="1">
    <citation type="journal article" date="2010" name="Genome Biol.">
        <title>Structure and dynamics of the pan-genome of Streptococcus pneumoniae and closely related species.</title>
        <authorList>
            <person name="Donati C."/>
            <person name="Hiller N.L."/>
            <person name="Tettelin H."/>
            <person name="Muzzi A."/>
            <person name="Croucher N.J."/>
            <person name="Angiuoli S.V."/>
            <person name="Oggioni M."/>
            <person name="Dunning Hotopp J.C."/>
            <person name="Hu F.Z."/>
            <person name="Riley D.R."/>
            <person name="Covacci A."/>
            <person name="Mitchell T.J."/>
            <person name="Bentley S.D."/>
            <person name="Kilian M."/>
            <person name="Ehrlich G.D."/>
            <person name="Rappuoli R."/>
            <person name="Moxon E.R."/>
            <person name="Masignani V."/>
        </authorList>
    </citation>
    <scope>NUCLEOTIDE SEQUENCE [LARGE SCALE GENOMIC DNA]</scope>
    <source>
        <strain>JJA</strain>
    </source>
</reference>
<comment type="function">
    <text evidence="1">Catalyzes oxygen-dependent 5-hydroxyuridine (ho5U) modification at position 34 in tRNAs.</text>
</comment>
<comment type="catalytic activity">
    <reaction evidence="1">
        <text>uridine(34) in tRNA + AH2 + O2 = 5-hydroxyuridine(34) in tRNA + A + H2O</text>
        <dbReference type="Rhea" id="RHEA:64224"/>
        <dbReference type="Rhea" id="RHEA-COMP:11727"/>
        <dbReference type="Rhea" id="RHEA-COMP:13381"/>
        <dbReference type="ChEBI" id="CHEBI:13193"/>
        <dbReference type="ChEBI" id="CHEBI:15377"/>
        <dbReference type="ChEBI" id="CHEBI:15379"/>
        <dbReference type="ChEBI" id="CHEBI:17499"/>
        <dbReference type="ChEBI" id="CHEBI:65315"/>
        <dbReference type="ChEBI" id="CHEBI:136877"/>
    </reaction>
</comment>
<comment type="similarity">
    <text evidence="1">Belongs to the TrhO family.</text>
</comment>
<feature type="chain" id="PRO_1000135480" description="tRNA uridine(34) hydroxylase">
    <location>
        <begin position="1"/>
        <end position="328"/>
    </location>
</feature>
<feature type="domain" description="Rhodanese" evidence="1">
    <location>
        <begin position="130"/>
        <end position="224"/>
    </location>
</feature>
<feature type="active site" description="Cysteine persulfide intermediate" evidence="1">
    <location>
        <position position="184"/>
    </location>
</feature>
<name>TRHO_STRZJ</name>
<protein>
    <recommendedName>
        <fullName evidence="1">tRNA uridine(34) hydroxylase</fullName>
        <ecNumber evidence="1">1.14.-.-</ecNumber>
    </recommendedName>
    <alternativeName>
        <fullName evidence="1">tRNA hydroxylation protein O</fullName>
    </alternativeName>
</protein>
<accession>C1CBR1</accession>
<dbReference type="EC" id="1.14.-.-" evidence="1"/>
<dbReference type="EMBL" id="CP000919">
    <property type="protein sequence ID" value="ACO18965.1"/>
    <property type="molecule type" value="Genomic_DNA"/>
</dbReference>
<dbReference type="RefSeq" id="WP_001030031.1">
    <property type="nucleotide sequence ID" value="NC_012466.1"/>
</dbReference>
<dbReference type="SMR" id="C1CBR1"/>
<dbReference type="KEGG" id="sjj:SPJ_0118"/>
<dbReference type="HOGENOM" id="CLU_038878_1_0_9"/>
<dbReference type="Proteomes" id="UP000002206">
    <property type="component" value="Chromosome"/>
</dbReference>
<dbReference type="GO" id="GO:0016705">
    <property type="term" value="F:oxidoreductase activity, acting on paired donors, with incorporation or reduction of molecular oxygen"/>
    <property type="evidence" value="ECO:0007669"/>
    <property type="project" value="UniProtKB-UniRule"/>
</dbReference>
<dbReference type="GO" id="GO:0006400">
    <property type="term" value="P:tRNA modification"/>
    <property type="evidence" value="ECO:0007669"/>
    <property type="project" value="UniProtKB-UniRule"/>
</dbReference>
<dbReference type="CDD" id="cd01518">
    <property type="entry name" value="RHOD_YceA"/>
    <property type="match status" value="1"/>
</dbReference>
<dbReference type="Gene3D" id="3.30.70.100">
    <property type="match status" value="1"/>
</dbReference>
<dbReference type="Gene3D" id="3.40.250.10">
    <property type="entry name" value="Rhodanese-like domain"/>
    <property type="match status" value="1"/>
</dbReference>
<dbReference type="HAMAP" id="MF_00469">
    <property type="entry name" value="TrhO"/>
    <property type="match status" value="1"/>
</dbReference>
<dbReference type="InterPro" id="IPR001763">
    <property type="entry name" value="Rhodanese-like_dom"/>
</dbReference>
<dbReference type="InterPro" id="IPR036873">
    <property type="entry name" value="Rhodanese-like_dom_sf"/>
</dbReference>
<dbReference type="InterPro" id="IPR022111">
    <property type="entry name" value="Rhodanese_C"/>
</dbReference>
<dbReference type="InterPro" id="IPR020936">
    <property type="entry name" value="TrhO"/>
</dbReference>
<dbReference type="InterPro" id="IPR040503">
    <property type="entry name" value="TRHO_N"/>
</dbReference>
<dbReference type="NCBIfam" id="NF001135">
    <property type="entry name" value="PRK00142.1-3"/>
    <property type="match status" value="1"/>
</dbReference>
<dbReference type="NCBIfam" id="NF001137">
    <property type="entry name" value="PRK00142.1-5"/>
    <property type="match status" value="1"/>
</dbReference>
<dbReference type="PANTHER" id="PTHR43268:SF3">
    <property type="entry name" value="RHODANESE-LIKE DOMAIN-CONTAINING PROTEIN 7-RELATED"/>
    <property type="match status" value="1"/>
</dbReference>
<dbReference type="PANTHER" id="PTHR43268">
    <property type="entry name" value="THIOSULFATE SULFURTRANSFERASE/RHODANESE-LIKE DOMAIN-CONTAINING PROTEIN 2"/>
    <property type="match status" value="1"/>
</dbReference>
<dbReference type="Pfam" id="PF00581">
    <property type="entry name" value="Rhodanese"/>
    <property type="match status" value="1"/>
</dbReference>
<dbReference type="Pfam" id="PF12368">
    <property type="entry name" value="Rhodanese_C"/>
    <property type="match status" value="1"/>
</dbReference>
<dbReference type="Pfam" id="PF17773">
    <property type="entry name" value="UPF0176_N"/>
    <property type="match status" value="1"/>
</dbReference>
<dbReference type="SMART" id="SM00450">
    <property type="entry name" value="RHOD"/>
    <property type="match status" value="1"/>
</dbReference>
<dbReference type="SUPFAM" id="SSF52821">
    <property type="entry name" value="Rhodanese/Cell cycle control phosphatase"/>
    <property type="match status" value="1"/>
</dbReference>
<dbReference type="PROSITE" id="PS50206">
    <property type="entry name" value="RHODANESE_3"/>
    <property type="match status" value="1"/>
</dbReference>
<keyword id="KW-0560">Oxidoreductase</keyword>
<keyword id="KW-0819">tRNA processing</keyword>
<sequence length="328" mass="37906">MAKDIRVLLYYLYTPIENAEQFAADHLAFCKSIGLKGRILVADEGINGTVSGDYETTQKYMDYVHSLPGMEELWFKIDEENEQAFKKMFVRYKKEIVHLGLEDNDFDNDINPLETTGAYLSPKEFKEALLDKDTVVLDTRNDYEYDLGHFRGAIRPDIRNFRELPQWVRDNKEKFMDKRVVVYCTGGVRCEKFSGWMVREGYKDVGQLHGGIATYGKDPEVQGELWDGKMYVFDERIAVDVNHVNPTIVGKDWFDGTPCERYVNCGNPFCNRRILTSEENEDKYLRGCSHECRVHPRNRYVSKNELTQAEVIERLAAIGESLDQAATV</sequence>
<gene>
    <name evidence="1" type="primary">trhO</name>
    <name type="ordered locus">SPJ_0118</name>
</gene>
<evidence type="ECO:0000255" key="1">
    <source>
        <dbReference type="HAMAP-Rule" id="MF_00469"/>
    </source>
</evidence>
<proteinExistence type="inferred from homology"/>
<organism>
    <name type="scientific">Streptococcus pneumoniae (strain JJA)</name>
    <dbReference type="NCBI Taxonomy" id="488222"/>
    <lineage>
        <taxon>Bacteria</taxon>
        <taxon>Bacillati</taxon>
        <taxon>Bacillota</taxon>
        <taxon>Bacilli</taxon>
        <taxon>Lactobacillales</taxon>
        <taxon>Streptococcaceae</taxon>
        <taxon>Streptococcus</taxon>
    </lineage>
</organism>